<protein>
    <recommendedName>
        <fullName evidence="1">Ribosomal RNA small subunit methyltransferase H</fullName>
        <ecNumber evidence="1">2.1.1.199</ecNumber>
    </recommendedName>
    <alternativeName>
        <fullName evidence="1">16S rRNA m(4)C1402 methyltransferase</fullName>
    </alternativeName>
    <alternativeName>
        <fullName evidence="1">rRNA (cytosine-N(4)-)-methyltransferase RsmH</fullName>
    </alternativeName>
</protein>
<dbReference type="EC" id="2.1.1.199" evidence="1"/>
<dbReference type="EMBL" id="CP000033">
    <property type="protein sequence ID" value="AAV42667.1"/>
    <property type="molecule type" value="Genomic_DNA"/>
</dbReference>
<dbReference type="RefSeq" id="WP_003546789.1">
    <property type="nucleotide sequence ID" value="NC_006814.3"/>
</dbReference>
<dbReference type="RefSeq" id="YP_193698.1">
    <property type="nucleotide sequence ID" value="NC_006814.3"/>
</dbReference>
<dbReference type="SMR" id="Q5FKV7"/>
<dbReference type="STRING" id="272621.LBA0803"/>
<dbReference type="GeneID" id="93290073"/>
<dbReference type="KEGG" id="lac:LBA0803"/>
<dbReference type="PATRIC" id="fig|272621.13.peg.766"/>
<dbReference type="eggNOG" id="COG0275">
    <property type="taxonomic scope" value="Bacteria"/>
</dbReference>
<dbReference type="HOGENOM" id="CLU_038422_2_0_9"/>
<dbReference type="OrthoDB" id="9806637at2"/>
<dbReference type="BioCyc" id="LACI272621:G1G49-817-MONOMER"/>
<dbReference type="Proteomes" id="UP000006381">
    <property type="component" value="Chromosome"/>
</dbReference>
<dbReference type="GO" id="GO:0005737">
    <property type="term" value="C:cytoplasm"/>
    <property type="evidence" value="ECO:0007669"/>
    <property type="project" value="UniProtKB-SubCell"/>
</dbReference>
<dbReference type="GO" id="GO:0071424">
    <property type="term" value="F:rRNA (cytosine-N4-)-methyltransferase activity"/>
    <property type="evidence" value="ECO:0007669"/>
    <property type="project" value="UniProtKB-UniRule"/>
</dbReference>
<dbReference type="GO" id="GO:0070475">
    <property type="term" value="P:rRNA base methylation"/>
    <property type="evidence" value="ECO:0007669"/>
    <property type="project" value="UniProtKB-UniRule"/>
</dbReference>
<dbReference type="FunFam" id="1.10.150.170:FF:000001">
    <property type="entry name" value="Ribosomal RNA small subunit methyltransferase H"/>
    <property type="match status" value="1"/>
</dbReference>
<dbReference type="Gene3D" id="1.10.150.170">
    <property type="entry name" value="Putative methyltransferase TM0872, insert domain"/>
    <property type="match status" value="1"/>
</dbReference>
<dbReference type="Gene3D" id="3.40.50.150">
    <property type="entry name" value="Vaccinia Virus protein VP39"/>
    <property type="match status" value="1"/>
</dbReference>
<dbReference type="HAMAP" id="MF_01007">
    <property type="entry name" value="16SrRNA_methyltr_H"/>
    <property type="match status" value="1"/>
</dbReference>
<dbReference type="InterPro" id="IPR002903">
    <property type="entry name" value="RsmH"/>
</dbReference>
<dbReference type="InterPro" id="IPR023397">
    <property type="entry name" value="SAM-dep_MeTrfase_MraW_recog"/>
</dbReference>
<dbReference type="InterPro" id="IPR029063">
    <property type="entry name" value="SAM-dependent_MTases_sf"/>
</dbReference>
<dbReference type="NCBIfam" id="TIGR00006">
    <property type="entry name" value="16S rRNA (cytosine(1402)-N(4))-methyltransferase RsmH"/>
    <property type="match status" value="1"/>
</dbReference>
<dbReference type="PANTHER" id="PTHR11265:SF0">
    <property type="entry name" value="12S RRNA N4-METHYLCYTIDINE METHYLTRANSFERASE"/>
    <property type="match status" value="1"/>
</dbReference>
<dbReference type="PANTHER" id="PTHR11265">
    <property type="entry name" value="S-ADENOSYL-METHYLTRANSFERASE MRAW"/>
    <property type="match status" value="1"/>
</dbReference>
<dbReference type="Pfam" id="PF01795">
    <property type="entry name" value="Methyltransf_5"/>
    <property type="match status" value="1"/>
</dbReference>
<dbReference type="PIRSF" id="PIRSF004486">
    <property type="entry name" value="MraW"/>
    <property type="match status" value="1"/>
</dbReference>
<dbReference type="SUPFAM" id="SSF81799">
    <property type="entry name" value="Putative methyltransferase TM0872, insert domain"/>
    <property type="match status" value="1"/>
</dbReference>
<dbReference type="SUPFAM" id="SSF53335">
    <property type="entry name" value="S-adenosyl-L-methionine-dependent methyltransferases"/>
    <property type="match status" value="1"/>
</dbReference>
<keyword id="KW-0963">Cytoplasm</keyword>
<keyword id="KW-0489">Methyltransferase</keyword>
<keyword id="KW-1185">Reference proteome</keyword>
<keyword id="KW-0698">rRNA processing</keyword>
<keyword id="KW-0949">S-adenosyl-L-methionine</keyword>
<keyword id="KW-0808">Transferase</keyword>
<proteinExistence type="inferred from homology"/>
<evidence type="ECO:0000255" key="1">
    <source>
        <dbReference type="HAMAP-Rule" id="MF_01007"/>
    </source>
</evidence>
<accession>Q5FKV7</accession>
<name>RSMH_LACAC</name>
<gene>
    <name evidence="1" type="primary">rsmH</name>
    <name type="synonym">mraW</name>
    <name type="ordered locus">LBA0803</name>
</gene>
<organism>
    <name type="scientific">Lactobacillus acidophilus (strain ATCC 700396 / NCK56 / N2 / NCFM)</name>
    <dbReference type="NCBI Taxonomy" id="272621"/>
    <lineage>
        <taxon>Bacteria</taxon>
        <taxon>Bacillati</taxon>
        <taxon>Bacillota</taxon>
        <taxon>Bacilli</taxon>
        <taxon>Lactobacillales</taxon>
        <taxon>Lactobacillaceae</taxon>
        <taxon>Lactobacillus</taxon>
    </lineage>
</organism>
<sequence>MKFKHTSVLLHETIDNLKPKNDGLYVDATFGGGGHAKYLLSKIDTGTLIGFDQDEYAIKSAELNFANLLKPDSEPKLQLVHDNFSNLEENLVKLGYTDGIDGIYYDLGVSSPQFDQADRGFSYRYNARLDMRMNQDQDLDAYQLVNTLSQKELADILYQYGDEKFSRQIAHKIVEKRKEKPIVTTFELVDIIKDAIPAYARRTGGHPAKKSFQALRVAVNHELDVLQASLEEAIKVLRPGGRISVITFQSHEDKIVKKIFKKYSEVEVPRGMPFIPDDMKPTLKLVNRKPIVASDSELENNNRSHSAKLRVAEKL</sequence>
<comment type="function">
    <text evidence="1">Specifically methylates the N4 position of cytidine in position 1402 (C1402) of 16S rRNA.</text>
</comment>
<comment type="catalytic activity">
    <reaction evidence="1">
        <text>cytidine(1402) in 16S rRNA + S-adenosyl-L-methionine = N(4)-methylcytidine(1402) in 16S rRNA + S-adenosyl-L-homocysteine + H(+)</text>
        <dbReference type="Rhea" id="RHEA:42928"/>
        <dbReference type="Rhea" id="RHEA-COMP:10286"/>
        <dbReference type="Rhea" id="RHEA-COMP:10287"/>
        <dbReference type="ChEBI" id="CHEBI:15378"/>
        <dbReference type="ChEBI" id="CHEBI:57856"/>
        <dbReference type="ChEBI" id="CHEBI:59789"/>
        <dbReference type="ChEBI" id="CHEBI:74506"/>
        <dbReference type="ChEBI" id="CHEBI:82748"/>
        <dbReference type="EC" id="2.1.1.199"/>
    </reaction>
</comment>
<comment type="subcellular location">
    <subcellularLocation>
        <location evidence="1">Cytoplasm</location>
    </subcellularLocation>
</comment>
<comment type="similarity">
    <text evidence="1">Belongs to the methyltransferase superfamily. RsmH family.</text>
</comment>
<reference key="1">
    <citation type="journal article" date="2005" name="Proc. Natl. Acad. Sci. U.S.A.">
        <title>Complete genome sequence of the probiotic lactic acid bacterium Lactobacillus acidophilus NCFM.</title>
        <authorList>
            <person name="Altermann E."/>
            <person name="Russell W.M."/>
            <person name="Azcarate-Peril M.A."/>
            <person name="Barrangou R."/>
            <person name="Buck B.L."/>
            <person name="McAuliffe O."/>
            <person name="Souther N."/>
            <person name="Dobson A."/>
            <person name="Duong T."/>
            <person name="Callanan M."/>
            <person name="Lick S."/>
            <person name="Hamrick A."/>
            <person name="Cano R."/>
            <person name="Klaenhammer T.R."/>
        </authorList>
    </citation>
    <scope>NUCLEOTIDE SEQUENCE [LARGE SCALE GENOMIC DNA]</scope>
    <source>
        <strain>ATCC 700396 / NCK56 / N2 / NCFM</strain>
    </source>
</reference>
<feature type="chain" id="PRO_0000108641" description="Ribosomal RNA small subunit methyltransferase H">
    <location>
        <begin position="1"/>
        <end position="315"/>
    </location>
</feature>
<feature type="binding site" evidence="1">
    <location>
        <begin position="33"/>
        <end position="35"/>
    </location>
    <ligand>
        <name>S-adenosyl-L-methionine</name>
        <dbReference type="ChEBI" id="CHEBI:59789"/>
    </ligand>
</feature>
<feature type="binding site" evidence="1">
    <location>
        <position position="52"/>
    </location>
    <ligand>
        <name>S-adenosyl-L-methionine</name>
        <dbReference type="ChEBI" id="CHEBI:59789"/>
    </ligand>
</feature>
<feature type="binding site" evidence="1">
    <location>
        <position position="84"/>
    </location>
    <ligand>
        <name>S-adenosyl-L-methionine</name>
        <dbReference type="ChEBI" id="CHEBI:59789"/>
    </ligand>
</feature>
<feature type="binding site" evidence="1">
    <location>
        <position position="106"/>
    </location>
    <ligand>
        <name>S-adenosyl-L-methionine</name>
        <dbReference type="ChEBI" id="CHEBI:59789"/>
    </ligand>
</feature>
<feature type="binding site" evidence="1">
    <location>
        <position position="113"/>
    </location>
    <ligand>
        <name>S-adenosyl-L-methionine</name>
        <dbReference type="ChEBI" id="CHEBI:59789"/>
    </ligand>
</feature>